<protein>
    <recommendedName>
        <fullName evidence="1">Phosphoribosyl isomerase A</fullName>
    </recommendedName>
    <alternativeName>
        <fullName evidence="1">1-(5-phosphoribosyl)-5-[(5-phosphoribosylamino)methylideneamino] imidazole-4-carboxamide isomerase</fullName>
        <ecNumber evidence="1">5.3.1.16</ecNumber>
    </alternativeName>
    <alternativeName>
        <fullName evidence="1">N-(5'-phosphoribosyl)anthranilate isomerase</fullName>
        <shortName evidence="1">PRAI</shortName>
        <ecNumber evidence="1">5.3.1.24</ecNumber>
    </alternativeName>
    <alternativeName>
        <fullName evidence="1">Phosphoribosylformimino-5-aminoimidazole carboxamide ribotide isomerase</fullName>
    </alternativeName>
</protein>
<evidence type="ECO:0000255" key="1">
    <source>
        <dbReference type="HAMAP-Rule" id="MF_01014"/>
    </source>
</evidence>
<reference key="1">
    <citation type="journal article" date="2008" name="PLoS ONE">
        <title>Genetic basis of virulence attenuation revealed by comparative genomic analysis of Mycobacterium tuberculosis strain H37Ra versus H37Rv.</title>
        <authorList>
            <person name="Zheng H."/>
            <person name="Lu L."/>
            <person name="Wang B."/>
            <person name="Pu S."/>
            <person name="Zhang X."/>
            <person name="Zhu G."/>
            <person name="Shi W."/>
            <person name="Zhang L."/>
            <person name="Wang H."/>
            <person name="Wang S."/>
            <person name="Zhao G."/>
            <person name="Zhang Y."/>
        </authorList>
    </citation>
    <scope>NUCLEOTIDE SEQUENCE [LARGE SCALE GENOMIC DNA]</scope>
    <source>
        <strain>ATCC 25177 / H37Ra</strain>
    </source>
</reference>
<accession>A5U2V9</accession>
<sequence length="245" mass="25763">MMPLILLPAVDVVEGRAVRLVQGKAGSQTEYGSAVDAALGWQRDGAEWIHLVDLDAAFGRGSNHELLAEVVGKLDVQVELSGGIRDDESLAAALATGCARVNVGTAALENPQWCARVIGEHGDQVAVGLDVQIIDGEHRLRGRGWETDGGDLWDVLERLDSEGCSRFVVTDITKDGTLGGPNLDLLAGVADRTDAPVIASGGVSSLDDLRAIATLTHRGVEGAIVGKALYARRFTLPQALAAVRD</sequence>
<organism>
    <name type="scientific">Mycobacterium tuberculosis (strain ATCC 25177 / H37Ra)</name>
    <dbReference type="NCBI Taxonomy" id="419947"/>
    <lineage>
        <taxon>Bacteria</taxon>
        <taxon>Bacillati</taxon>
        <taxon>Actinomycetota</taxon>
        <taxon>Actinomycetes</taxon>
        <taxon>Mycobacteriales</taxon>
        <taxon>Mycobacteriaceae</taxon>
        <taxon>Mycobacterium</taxon>
        <taxon>Mycobacterium tuberculosis complex</taxon>
    </lineage>
</organism>
<gene>
    <name evidence="1" type="primary">priA</name>
    <name evidence="1" type="synonym">hisA</name>
    <name type="ordered locus">MRA_1613</name>
</gene>
<proteinExistence type="inferred from homology"/>
<comment type="function">
    <text evidence="1">Involved in both the histidine and tryptophan biosynthetic pathways.</text>
</comment>
<comment type="catalytic activity">
    <reaction evidence="1">
        <text>1-(5-phospho-beta-D-ribosyl)-5-[(5-phospho-beta-D-ribosylamino)methylideneamino]imidazole-4-carboxamide = 5-[(5-phospho-1-deoxy-D-ribulos-1-ylimino)methylamino]-1-(5-phospho-beta-D-ribosyl)imidazole-4-carboxamide</text>
        <dbReference type="Rhea" id="RHEA:15469"/>
        <dbReference type="ChEBI" id="CHEBI:58435"/>
        <dbReference type="ChEBI" id="CHEBI:58525"/>
        <dbReference type="EC" id="5.3.1.16"/>
    </reaction>
</comment>
<comment type="catalytic activity">
    <reaction evidence="1">
        <text>N-(5-phospho-beta-D-ribosyl)anthranilate = 1-(2-carboxyphenylamino)-1-deoxy-D-ribulose 5-phosphate</text>
        <dbReference type="Rhea" id="RHEA:21540"/>
        <dbReference type="ChEBI" id="CHEBI:18277"/>
        <dbReference type="ChEBI" id="CHEBI:58613"/>
        <dbReference type="EC" id="5.3.1.24"/>
    </reaction>
</comment>
<comment type="pathway">
    <text evidence="1">Amino-acid biosynthesis; L-histidine biosynthesis; L-histidine from 5-phospho-alpha-D-ribose 1-diphosphate: step 4/9.</text>
</comment>
<comment type="pathway">
    <text evidence="1">Amino-acid biosynthesis; L-tryptophan biosynthesis; L-tryptophan from chorismate: step 3/5.</text>
</comment>
<comment type="subcellular location">
    <subcellularLocation>
        <location evidence="1">Cytoplasm</location>
    </subcellularLocation>
</comment>
<comment type="similarity">
    <text evidence="1">Belongs to the HisA/HisF family.</text>
</comment>
<feature type="chain" id="PRO_1000063221" description="Phosphoribosyl isomerase A">
    <location>
        <begin position="1"/>
        <end position="245"/>
    </location>
</feature>
<feature type="active site" description="Proton acceptor" evidence="1">
    <location>
        <position position="11"/>
    </location>
</feature>
<feature type="active site" description="Proton donor" evidence="1">
    <location>
        <position position="130"/>
    </location>
</feature>
<name>HIS4_MYCTA</name>
<dbReference type="EC" id="5.3.1.16" evidence="1"/>
<dbReference type="EC" id="5.3.1.24" evidence="1"/>
<dbReference type="EMBL" id="CP000611">
    <property type="protein sequence ID" value="ABQ73359.1"/>
    <property type="molecule type" value="Genomic_DNA"/>
</dbReference>
<dbReference type="RefSeq" id="WP_003900374.1">
    <property type="nucleotide sequence ID" value="NZ_CP016972.1"/>
</dbReference>
<dbReference type="SMR" id="A5U2V9"/>
<dbReference type="KEGG" id="mra:MRA_1613"/>
<dbReference type="eggNOG" id="COG0106">
    <property type="taxonomic scope" value="Bacteria"/>
</dbReference>
<dbReference type="HOGENOM" id="CLU_048577_1_1_11"/>
<dbReference type="UniPathway" id="UPA00031">
    <property type="reaction ID" value="UER00009"/>
</dbReference>
<dbReference type="UniPathway" id="UPA00035">
    <property type="reaction ID" value="UER00042"/>
</dbReference>
<dbReference type="Proteomes" id="UP000001988">
    <property type="component" value="Chromosome"/>
</dbReference>
<dbReference type="GO" id="GO:0005737">
    <property type="term" value="C:cytoplasm"/>
    <property type="evidence" value="ECO:0007669"/>
    <property type="project" value="UniProtKB-SubCell"/>
</dbReference>
<dbReference type="GO" id="GO:0003949">
    <property type="term" value="F:1-(5-phosphoribosyl)-5-[(5-phosphoribosylamino)methylideneamino]imidazole-4-carboxamide isomerase activity"/>
    <property type="evidence" value="ECO:0007669"/>
    <property type="project" value="UniProtKB-UniRule"/>
</dbReference>
<dbReference type="GO" id="GO:0004640">
    <property type="term" value="F:phosphoribosylanthranilate isomerase activity"/>
    <property type="evidence" value="ECO:0007669"/>
    <property type="project" value="UniProtKB-UniRule"/>
</dbReference>
<dbReference type="GO" id="GO:0000105">
    <property type="term" value="P:L-histidine biosynthetic process"/>
    <property type="evidence" value="ECO:0007669"/>
    <property type="project" value="UniProtKB-UniRule"/>
</dbReference>
<dbReference type="GO" id="GO:0000162">
    <property type="term" value="P:L-tryptophan biosynthetic process"/>
    <property type="evidence" value="ECO:0007669"/>
    <property type="project" value="UniProtKB-UniRule"/>
</dbReference>
<dbReference type="CDD" id="cd04732">
    <property type="entry name" value="HisA"/>
    <property type="match status" value="1"/>
</dbReference>
<dbReference type="FunFam" id="3.20.20.70:FF:000009">
    <property type="entry name" value="1-(5-phosphoribosyl)-5-[(5-phosphoribosylamino)methylideneamino] imidazole-4-carboxamide isomerase"/>
    <property type="match status" value="1"/>
</dbReference>
<dbReference type="Gene3D" id="3.20.20.70">
    <property type="entry name" value="Aldolase class I"/>
    <property type="match status" value="1"/>
</dbReference>
<dbReference type="HAMAP" id="MF_01014">
    <property type="entry name" value="HisA"/>
    <property type="match status" value="1"/>
</dbReference>
<dbReference type="InterPro" id="IPR013785">
    <property type="entry name" value="Aldolase_TIM"/>
</dbReference>
<dbReference type="InterPro" id="IPR006062">
    <property type="entry name" value="His_biosynth"/>
</dbReference>
<dbReference type="InterPro" id="IPR010188">
    <property type="entry name" value="HisA/PriA_Actinobacteria"/>
</dbReference>
<dbReference type="InterPro" id="IPR044524">
    <property type="entry name" value="Isoase_HisA-like"/>
</dbReference>
<dbReference type="InterPro" id="IPR023016">
    <property type="entry name" value="Isoase_HisA-like_bact"/>
</dbReference>
<dbReference type="InterPro" id="IPR011060">
    <property type="entry name" value="RibuloseP-bd_barrel"/>
</dbReference>
<dbReference type="NCBIfam" id="TIGR01919">
    <property type="entry name" value="hisA-trpF"/>
    <property type="match status" value="1"/>
</dbReference>
<dbReference type="PANTHER" id="PTHR43090">
    <property type="entry name" value="1-(5-PHOSPHORIBOSYL)-5-[(5-PHOSPHORIBOSYLAMINO)METHYLIDENEAMINO] IMIDAZOLE-4-CARBOXAMIDE ISOMERASE"/>
    <property type="match status" value="1"/>
</dbReference>
<dbReference type="PANTHER" id="PTHR43090:SF2">
    <property type="entry name" value="1-(5-PHOSPHORIBOSYL)-5-[(5-PHOSPHORIBOSYLAMINO)METHYLIDENEAMINO] IMIDAZOLE-4-CARBOXAMIDE ISOMERASE"/>
    <property type="match status" value="1"/>
</dbReference>
<dbReference type="Pfam" id="PF00977">
    <property type="entry name" value="His_biosynth"/>
    <property type="match status" value="1"/>
</dbReference>
<dbReference type="SUPFAM" id="SSF51366">
    <property type="entry name" value="Ribulose-phoshate binding barrel"/>
    <property type="match status" value="1"/>
</dbReference>
<keyword id="KW-0028">Amino-acid biosynthesis</keyword>
<keyword id="KW-0057">Aromatic amino acid biosynthesis</keyword>
<keyword id="KW-0963">Cytoplasm</keyword>
<keyword id="KW-0368">Histidine biosynthesis</keyword>
<keyword id="KW-0413">Isomerase</keyword>
<keyword id="KW-1185">Reference proteome</keyword>
<keyword id="KW-0822">Tryptophan biosynthesis</keyword>